<protein>
    <recommendedName>
        <fullName evidence="7">Flavodoxin/ferredoxin--NADP reductase</fullName>
        <ecNumber evidence="2 5">1.18.1.2</ecNumber>
        <ecNumber evidence="2 3 5">1.19.1.1</ecNumber>
    </recommendedName>
    <alternativeName>
        <fullName evidence="7">Ferredoxin (flavodoxin):NADP(+) oxidoreductase</fullName>
    </alternativeName>
    <alternativeName>
        <fullName evidence="7">Ferredoxin--NADP reductase</fullName>
        <shortName evidence="7">FNR</shortName>
    </alternativeName>
    <alternativeName>
        <fullName evidence="7">Flavodoxin--NADP reductase</fullName>
        <shortName evidence="7">FLDR</shortName>
    </alternativeName>
</protein>
<reference key="1">
    <citation type="journal article" date="2003" name="FEBS Lett.">
        <title>The oxidant-responsive diaphorase of Rhodobacter capsulatus is a ferredoxin (flavodoxin)-NADP(H) reductase.</title>
        <authorList>
            <person name="Bittel C."/>
            <person name="Tabares L.C."/>
            <person name="Armesto M."/>
            <person name="Carrillo N."/>
            <person name="Cortez N."/>
        </authorList>
    </citation>
    <scope>NUCLEOTIDE SEQUENCE [GENOMIC DNA]</scope>
    <scope>PROTEIN SEQUENCE OF 2-6</scope>
    <scope>FUNCTION</scope>
    <scope>CATALYTIC ACTIVITY</scope>
    <scope>COFACTOR</scope>
    <scope>SUBUNIT</scope>
    <scope>SUBCELLULAR LOCATION</scope>
    <scope>INDUCTION</scope>
    <source>
        <strain>DSM 938 / 37b4</strain>
    </source>
</reference>
<reference evidence="9 10" key="2">
    <citation type="journal article" date="2005" name="Biochemistry">
        <title>The ferredoxin-NADP(H) reductase from Rhodobacter capsulatus: molecular structure and catalytic mechanism.</title>
        <authorList>
            <person name="Nogues I."/>
            <person name="Perez-Dorado I."/>
            <person name="Frago S."/>
            <person name="Bittel C."/>
            <person name="Mayhew S.G."/>
            <person name="Gomez-Moreno C."/>
            <person name="Hermoso J.A."/>
            <person name="Medina M."/>
            <person name="Cortez N."/>
            <person name="Carrillo N."/>
        </authorList>
    </citation>
    <scope>X-RAY CRYSTALLOGRAPHY (1.68 ANGSTROMS) IN COMPLEX WITH FAD</scope>
    <scope>FUNCTION</scope>
    <scope>CATALYTIC ACTIVITY</scope>
    <scope>COFACTOR</scope>
    <source>
        <strain>DSM 938 / 37b4</strain>
    </source>
</reference>
<reference evidence="11 12 13 14" key="3">
    <citation type="journal article" date="2009" name="Biochim. Biophys. Acta">
        <title>Coenzyme binding and hydride transfer in Rhodobacter capsulatus ferredoxin/flavodoxin NADP(H) oxidoreductase.</title>
        <authorList>
            <person name="Bortolotti A."/>
            <person name="Perez-Dorado I."/>
            <person name="Goni G."/>
            <person name="Medina M."/>
            <person name="Hermoso J.A."/>
            <person name="Carrillo N."/>
            <person name="Cortez N."/>
        </authorList>
    </citation>
    <scope>X-RAY CRYSTALLOGRAPHY (1.93 ANGSTROMS) IN COMPLEX WITH FAD AND NADP</scope>
    <scope>COFACTOR</scope>
</reference>
<reference evidence="15" key="4">
    <citation type="journal article" date="2014" name="Biochim. Biophys. Acta">
        <title>The C-terminal extension of bacterial flavodoxin-reductases: involvement in the hydride transfer mechanism from the coenzyme.</title>
        <authorList>
            <person name="Bortolotti A."/>
            <person name="Sanchez-Azqueta A."/>
            <person name="Maya C.M."/>
            <person name="Velazquez-Campoy A."/>
            <person name="Hermoso J.A."/>
            <person name="Medina M."/>
            <person name="Cortez N."/>
        </authorList>
    </citation>
    <scope>X-RAY CRYSTALLOGRAPHY (1.70 ANGSTROMS) OF 14-264 IN COMPLEX WITH FAD</scope>
    <scope>FUNCTION</scope>
    <scope>CATALYTIC ACTIVITY</scope>
    <scope>COFACTOR</scope>
    <scope>BIOPHYSICOCHEMICAL PROPERTIES</scope>
    <scope>MUTAGENESIS OF ALA-264</scope>
</reference>
<sequence>MNETTPIAPAKVLPDAQTVTSVRHWTDTLFSFRVTRPQTLRFRSGEFVMIGLLDDNGKPIMRAYSIASPAWDEELEFYSIKVPDGPLTSRLQHIKVGEQIILRPKPVGTLVIDALLPGKRLWFLATGTGIAPFASLMREPEAYEKFDEVIMMHACRTVAELEYGRQLVEALQEDPLIGELVEGKLKYYPTTTREEFHHMGRITDNLASGKVFEDLGIAPMNPETDRAMVCGSLAFNVDVMKVLESYGLREGANSEPREFVVEKAFVGEGI</sequence>
<dbReference type="EC" id="1.18.1.2" evidence="2 5"/>
<dbReference type="EC" id="1.19.1.1" evidence="2 3 5"/>
<dbReference type="EMBL" id="AF232063">
    <property type="protein sequence ID" value="AAF35905.1"/>
    <property type="status" value="ALT_INIT"/>
    <property type="molecule type" value="Genomic_DNA"/>
</dbReference>
<dbReference type="PDB" id="2BGI">
    <property type="method" value="X-ray"/>
    <property type="resolution" value="1.68 A"/>
    <property type="chains" value="A=1-270"/>
</dbReference>
<dbReference type="PDB" id="2BGJ">
    <property type="method" value="X-ray"/>
    <property type="resolution" value="2.10 A"/>
    <property type="chains" value="A/B/C/D=1-270"/>
</dbReference>
<dbReference type="PDB" id="2VNH">
    <property type="method" value="X-ray"/>
    <property type="resolution" value="2.27 A"/>
    <property type="chains" value="A=1-270"/>
</dbReference>
<dbReference type="PDB" id="2VNI">
    <property type="method" value="X-ray"/>
    <property type="resolution" value="2.24 A"/>
    <property type="chains" value="A=1-270"/>
</dbReference>
<dbReference type="PDB" id="2VNJ">
    <property type="method" value="X-ray"/>
    <property type="resolution" value="2.13 A"/>
    <property type="chains" value="A=1-270"/>
</dbReference>
<dbReference type="PDB" id="2VNK">
    <property type="method" value="X-ray"/>
    <property type="resolution" value="1.93 A"/>
    <property type="chains" value="A/B/C/D=1-270"/>
</dbReference>
<dbReference type="PDB" id="4K1X">
    <property type="method" value="X-ray"/>
    <property type="resolution" value="1.70 A"/>
    <property type="chains" value="A/B=14-264"/>
</dbReference>
<dbReference type="PDBsum" id="2BGI"/>
<dbReference type="PDBsum" id="2BGJ"/>
<dbReference type="PDBsum" id="2VNH"/>
<dbReference type="PDBsum" id="2VNI"/>
<dbReference type="PDBsum" id="2VNJ"/>
<dbReference type="PDBsum" id="2VNK"/>
<dbReference type="PDBsum" id="4K1X"/>
<dbReference type="SMR" id="Q9L6V3"/>
<dbReference type="DrugBank" id="DB04450">
    <property type="generic name" value="Heptyl 1-Thiohexopyranoside"/>
</dbReference>
<dbReference type="BRENDA" id="1.18.1.2">
    <property type="organism ID" value="5381"/>
</dbReference>
<dbReference type="BRENDA" id="1.19.1.1">
    <property type="organism ID" value="5381"/>
</dbReference>
<dbReference type="EvolutionaryTrace" id="Q9L6V3"/>
<dbReference type="GO" id="GO:0005737">
    <property type="term" value="C:cytoplasm"/>
    <property type="evidence" value="ECO:0007669"/>
    <property type="project" value="UniProtKB-SubCell"/>
</dbReference>
<dbReference type="GO" id="GO:0004324">
    <property type="term" value="F:ferredoxin-NADP+ reductase activity"/>
    <property type="evidence" value="ECO:0007669"/>
    <property type="project" value="UniProtKB-EC"/>
</dbReference>
<dbReference type="GO" id="GO:0000166">
    <property type="term" value="F:nucleotide binding"/>
    <property type="evidence" value="ECO:0007669"/>
    <property type="project" value="UniProtKB-KW"/>
</dbReference>
<dbReference type="GO" id="GO:0034599">
    <property type="term" value="P:cellular response to oxidative stress"/>
    <property type="evidence" value="ECO:0007669"/>
    <property type="project" value="TreeGrafter"/>
</dbReference>
<dbReference type="GO" id="GO:0042167">
    <property type="term" value="P:heme catabolic process"/>
    <property type="evidence" value="ECO:0007669"/>
    <property type="project" value="TreeGrafter"/>
</dbReference>
<dbReference type="CDD" id="cd06195">
    <property type="entry name" value="FNR1"/>
    <property type="match status" value="1"/>
</dbReference>
<dbReference type="Gene3D" id="3.40.50.80">
    <property type="entry name" value="Nucleotide-binding domain of ferredoxin-NADP reductase (FNR) module"/>
    <property type="match status" value="1"/>
</dbReference>
<dbReference type="Gene3D" id="2.40.30.10">
    <property type="entry name" value="Translation factors"/>
    <property type="match status" value="1"/>
</dbReference>
<dbReference type="InterPro" id="IPR008333">
    <property type="entry name" value="Cbr1-like_FAD-bd_dom"/>
</dbReference>
<dbReference type="InterPro" id="IPR017927">
    <property type="entry name" value="FAD-bd_FR_type"/>
</dbReference>
<dbReference type="InterPro" id="IPR001709">
    <property type="entry name" value="Flavoprot_Pyr_Nucl_cyt_Rdtase"/>
</dbReference>
<dbReference type="InterPro" id="IPR033892">
    <property type="entry name" value="FNR_bac"/>
</dbReference>
<dbReference type="InterPro" id="IPR039261">
    <property type="entry name" value="FNR_nucleotide-bd"/>
</dbReference>
<dbReference type="InterPro" id="IPR051930">
    <property type="entry name" value="FNR_type-1"/>
</dbReference>
<dbReference type="InterPro" id="IPR001433">
    <property type="entry name" value="OxRdtase_FAD/NAD-bd"/>
</dbReference>
<dbReference type="InterPro" id="IPR017938">
    <property type="entry name" value="Riboflavin_synthase-like_b-brl"/>
</dbReference>
<dbReference type="PANTHER" id="PTHR47878:SF1">
    <property type="entry name" value="FLAVODOXIN_FERREDOXIN--NADP REDUCTASE"/>
    <property type="match status" value="1"/>
</dbReference>
<dbReference type="PANTHER" id="PTHR47878">
    <property type="entry name" value="OXIDOREDUCTASE FAD/NAD(P)-BINDING DOMAIN PROTEIN"/>
    <property type="match status" value="1"/>
</dbReference>
<dbReference type="Pfam" id="PF00970">
    <property type="entry name" value="FAD_binding_6"/>
    <property type="match status" value="1"/>
</dbReference>
<dbReference type="Pfam" id="PF00175">
    <property type="entry name" value="NAD_binding_1"/>
    <property type="match status" value="1"/>
</dbReference>
<dbReference type="PRINTS" id="PR00371">
    <property type="entry name" value="FPNCR"/>
</dbReference>
<dbReference type="SUPFAM" id="SSF52343">
    <property type="entry name" value="Ferredoxin reductase-like, C-terminal NADP-linked domain"/>
    <property type="match status" value="1"/>
</dbReference>
<dbReference type="SUPFAM" id="SSF63380">
    <property type="entry name" value="Riboflavin synthase domain-like"/>
    <property type="match status" value="1"/>
</dbReference>
<dbReference type="PROSITE" id="PS51384">
    <property type="entry name" value="FAD_FR"/>
    <property type="match status" value="1"/>
</dbReference>
<name>FENR_RHOCA</name>
<accession>Q9L6V3</accession>
<organism>
    <name type="scientific">Rhodobacter capsulatus</name>
    <name type="common">Rhodopseudomonas capsulata</name>
    <dbReference type="NCBI Taxonomy" id="1061"/>
    <lineage>
        <taxon>Bacteria</taxon>
        <taxon>Pseudomonadati</taxon>
        <taxon>Pseudomonadota</taxon>
        <taxon>Alphaproteobacteria</taxon>
        <taxon>Rhodobacterales</taxon>
        <taxon>Rhodobacter group</taxon>
        <taxon>Rhodobacter</taxon>
    </lineage>
</organism>
<proteinExistence type="evidence at protein level"/>
<gene>
    <name evidence="6" type="primary">fpr</name>
</gene>
<feature type="initiator methionine" description="Removed" evidence="8">
    <location>
        <position position="1"/>
    </location>
</feature>
<feature type="chain" id="PRO_0000441750" description="Flavodoxin/ferredoxin--NADP reductase">
    <location>
        <begin position="2"/>
        <end position="270"/>
    </location>
</feature>
<feature type="domain" description="FAD-binding FR-type" evidence="1">
    <location>
        <begin position="12"/>
        <end position="113"/>
    </location>
</feature>
<feature type="binding site" evidence="3 4 5">
    <location>
        <begin position="62"/>
        <end position="65"/>
    </location>
    <ligand>
        <name>FAD</name>
        <dbReference type="ChEBI" id="CHEBI:57692"/>
    </ligand>
</feature>
<feature type="binding site" evidence="3 4 5">
    <location>
        <begin position="78"/>
        <end position="80"/>
    </location>
    <ligand>
        <name>FAD</name>
        <dbReference type="ChEBI" id="CHEBI:57692"/>
    </ligand>
</feature>
<feature type="binding site" evidence="3 4 5">
    <location>
        <begin position="86"/>
        <end position="88"/>
    </location>
    <ligand>
        <name>FAD</name>
        <dbReference type="ChEBI" id="CHEBI:57692"/>
    </ligand>
</feature>
<feature type="binding site" evidence="4">
    <location>
        <position position="126"/>
    </location>
    <ligand>
        <name>NADP(+)</name>
        <dbReference type="ChEBI" id="CHEBI:58349"/>
    </ligand>
</feature>
<feature type="binding site" evidence="3 4 5">
    <location>
        <position position="128"/>
    </location>
    <ligand>
        <name>FAD</name>
        <dbReference type="ChEBI" id="CHEBI:57692"/>
    </ligand>
</feature>
<feature type="binding site" evidence="4">
    <location>
        <position position="156"/>
    </location>
    <ligand>
        <name>NADP(+)</name>
        <dbReference type="ChEBI" id="CHEBI:58349"/>
    </ligand>
</feature>
<feature type="binding site" evidence="4">
    <location>
        <begin position="192"/>
        <end position="193"/>
    </location>
    <ligand>
        <name>NADP(+)</name>
        <dbReference type="ChEBI" id="CHEBI:58349"/>
    </ligand>
</feature>
<feature type="binding site" evidence="4">
    <location>
        <position position="201"/>
    </location>
    <ligand>
        <name>NADP(+)</name>
        <dbReference type="ChEBI" id="CHEBI:58349"/>
    </ligand>
</feature>
<feature type="binding site" evidence="4">
    <location>
        <position position="238"/>
    </location>
    <ligand>
        <name>NADP(+)</name>
        <dbReference type="ChEBI" id="CHEBI:58349"/>
    </ligand>
</feature>
<feature type="binding site" evidence="3 4">
    <location>
        <begin position="264"/>
        <end position="270"/>
    </location>
    <ligand>
        <name>FAD</name>
        <dbReference type="ChEBI" id="CHEBI:57692"/>
    </ligand>
</feature>
<feature type="mutagenesis site" description="3-fold decrease in kcat." evidence="5">
    <original>A</original>
    <variation>Y</variation>
    <location>
        <position position="264"/>
    </location>
</feature>
<feature type="strand" evidence="16">
    <location>
        <begin position="15"/>
        <end position="26"/>
    </location>
</feature>
<feature type="strand" evidence="16">
    <location>
        <begin position="29"/>
        <end position="35"/>
    </location>
</feature>
<feature type="strand" evidence="16">
    <location>
        <begin position="47"/>
        <end position="53"/>
    </location>
</feature>
<feature type="strand" evidence="16">
    <location>
        <begin position="59"/>
        <end position="65"/>
    </location>
</feature>
<feature type="strand" evidence="16">
    <location>
        <begin position="73"/>
        <end position="80"/>
    </location>
</feature>
<feature type="helix" evidence="16">
    <location>
        <begin position="88"/>
        <end position="91"/>
    </location>
</feature>
<feature type="strand" evidence="16">
    <location>
        <begin position="99"/>
        <end position="107"/>
    </location>
</feature>
<feature type="helix" evidence="16">
    <location>
        <begin position="112"/>
        <end position="114"/>
    </location>
</feature>
<feature type="strand" evidence="16">
    <location>
        <begin position="119"/>
        <end position="126"/>
    </location>
</feature>
<feature type="helix" evidence="16">
    <location>
        <begin position="127"/>
        <end position="130"/>
    </location>
</feature>
<feature type="helix" evidence="16">
    <location>
        <begin position="131"/>
        <end position="136"/>
    </location>
</feature>
<feature type="helix" evidence="16">
    <location>
        <begin position="140"/>
        <end position="143"/>
    </location>
</feature>
<feature type="strand" evidence="16">
    <location>
        <begin position="147"/>
        <end position="158"/>
    </location>
</feature>
<feature type="helix" evidence="16">
    <location>
        <begin position="159"/>
        <end position="161"/>
    </location>
</feature>
<feature type="helix" evidence="16">
    <location>
        <begin position="162"/>
        <end position="173"/>
    </location>
</feature>
<feature type="turn" evidence="16">
    <location>
        <begin position="175"/>
        <end position="179"/>
    </location>
</feature>
<feature type="turn" evidence="16">
    <location>
        <begin position="182"/>
        <end position="184"/>
    </location>
</feature>
<feature type="strand" evidence="16">
    <location>
        <begin position="185"/>
        <end position="194"/>
    </location>
</feature>
<feature type="strand" evidence="16">
    <location>
        <begin position="197"/>
        <end position="199"/>
    </location>
</feature>
<feature type="helix" evidence="16">
    <location>
        <begin position="202"/>
        <end position="207"/>
    </location>
</feature>
<feature type="helix" evidence="16">
    <location>
        <begin position="210"/>
        <end position="215"/>
    </location>
</feature>
<feature type="turn" evidence="16">
    <location>
        <begin position="222"/>
        <end position="224"/>
    </location>
</feature>
<feature type="strand" evidence="16">
    <location>
        <begin position="225"/>
        <end position="231"/>
    </location>
</feature>
<feature type="helix" evidence="16">
    <location>
        <begin position="233"/>
        <end position="244"/>
    </location>
</feature>
<feature type="turn" evidence="16">
    <location>
        <begin position="245"/>
        <end position="247"/>
    </location>
</feature>
<feature type="turn" evidence="17">
    <location>
        <begin position="252"/>
        <end position="254"/>
    </location>
</feature>
<feature type="strand" evidence="16">
    <location>
        <begin position="257"/>
        <end position="268"/>
    </location>
</feature>
<comment type="function">
    <text evidence="2 3 5">Transports electrons between flavodoxin or ferredoxin and NADPH.</text>
</comment>
<comment type="catalytic activity">
    <reaction evidence="2 5">
        <text>2 reduced [2Fe-2S]-[ferredoxin] + NADP(+) + H(+) = 2 oxidized [2Fe-2S]-[ferredoxin] + NADPH</text>
        <dbReference type="Rhea" id="RHEA:20125"/>
        <dbReference type="Rhea" id="RHEA-COMP:10000"/>
        <dbReference type="Rhea" id="RHEA-COMP:10001"/>
        <dbReference type="ChEBI" id="CHEBI:15378"/>
        <dbReference type="ChEBI" id="CHEBI:33737"/>
        <dbReference type="ChEBI" id="CHEBI:33738"/>
        <dbReference type="ChEBI" id="CHEBI:57783"/>
        <dbReference type="ChEBI" id="CHEBI:58349"/>
        <dbReference type="EC" id="1.18.1.2"/>
    </reaction>
</comment>
<comment type="catalytic activity">
    <reaction evidence="2 3 5">
        <text>reduced [flavodoxin] + NADP(+) = oxidized [flavodoxin] + NADPH + 2 H(+)</text>
        <dbReference type="Rhea" id="RHEA:50756"/>
        <dbReference type="Rhea" id="RHEA-COMP:10622"/>
        <dbReference type="Rhea" id="RHEA-COMP:10623"/>
        <dbReference type="ChEBI" id="CHEBI:15378"/>
        <dbReference type="ChEBI" id="CHEBI:57618"/>
        <dbReference type="ChEBI" id="CHEBI:57783"/>
        <dbReference type="ChEBI" id="CHEBI:58210"/>
        <dbReference type="ChEBI" id="CHEBI:58349"/>
        <dbReference type="EC" id="1.19.1.1"/>
    </reaction>
</comment>
<comment type="cofactor">
    <cofactor evidence="2 3 4 5">
        <name>FAD</name>
        <dbReference type="ChEBI" id="CHEBI:57692"/>
    </cofactor>
</comment>
<comment type="biophysicochemical properties">
    <kinetics>
        <KM evidence="5">93 uM for NADPH (in the presence of K(3)Fe(CN)(6))</KM>
        <KM evidence="5">85 uM for NADPH (in the presence of 2,6-dichlorophenolindophenol)</KM>
        <text evidence="5">kcat is 222 sec(-1) with K(3)Fe(CN)(6) as substrate. kcat is 20 sec(-1) with 2,6-dichlorophenolindophenol as substrate.</text>
    </kinetics>
</comment>
<comment type="subunit">
    <text evidence="2">Monomer.</text>
</comment>
<comment type="subcellular location">
    <subcellularLocation>
        <location evidence="8">Cytoplasm</location>
    </subcellularLocation>
</comment>
<comment type="induction">
    <text evidence="2">Induced under oxidative stress conditions.</text>
</comment>
<comment type="similarity">
    <text evidence="7">Belongs to the ferredoxin--NADP reductase type 1 family.</text>
</comment>
<comment type="sequence caution" evidence="7">
    <conflict type="erroneous initiation">
        <sequence resource="EMBL-CDS" id="AAF35905"/>
    </conflict>
    <text>Extended N-terminus.</text>
</comment>
<keyword id="KW-0002">3D-structure</keyword>
<keyword id="KW-0963">Cytoplasm</keyword>
<keyword id="KW-0903">Direct protein sequencing</keyword>
<keyword id="KW-0274">FAD</keyword>
<keyword id="KW-0285">Flavoprotein</keyword>
<keyword id="KW-0521">NADP</keyword>
<keyword id="KW-0547">Nucleotide-binding</keyword>
<keyword id="KW-0560">Oxidoreductase</keyword>
<evidence type="ECO:0000255" key="1">
    <source>
        <dbReference type="PROSITE-ProRule" id="PRU00716"/>
    </source>
</evidence>
<evidence type="ECO:0000269" key="2">
    <source>
    </source>
</evidence>
<evidence type="ECO:0000269" key="3">
    <source>
    </source>
</evidence>
<evidence type="ECO:0000269" key="4">
    <source>
    </source>
</evidence>
<evidence type="ECO:0000269" key="5">
    <source>
    </source>
</evidence>
<evidence type="ECO:0000303" key="6">
    <source>
    </source>
</evidence>
<evidence type="ECO:0000305" key="7"/>
<evidence type="ECO:0000305" key="8">
    <source>
    </source>
</evidence>
<evidence type="ECO:0007744" key="9">
    <source>
        <dbReference type="PDB" id="2BGI"/>
    </source>
</evidence>
<evidence type="ECO:0007744" key="10">
    <source>
        <dbReference type="PDB" id="2BGJ"/>
    </source>
</evidence>
<evidence type="ECO:0007744" key="11">
    <source>
        <dbReference type="PDB" id="2VNH"/>
    </source>
</evidence>
<evidence type="ECO:0007744" key="12">
    <source>
        <dbReference type="PDB" id="2VNI"/>
    </source>
</evidence>
<evidence type="ECO:0007744" key="13">
    <source>
        <dbReference type="PDB" id="2VNJ"/>
    </source>
</evidence>
<evidence type="ECO:0007744" key="14">
    <source>
        <dbReference type="PDB" id="2VNK"/>
    </source>
</evidence>
<evidence type="ECO:0007744" key="15">
    <source>
        <dbReference type="PDB" id="4K1X"/>
    </source>
</evidence>
<evidence type="ECO:0007829" key="16">
    <source>
        <dbReference type="PDB" id="2BGI"/>
    </source>
</evidence>
<evidence type="ECO:0007829" key="17">
    <source>
        <dbReference type="PDB" id="4K1X"/>
    </source>
</evidence>